<accession>P0DJN3</accession>
<organism>
    <name type="scientific">Crotalus durissus cumanensis</name>
    <name type="common">South American rattlesnake</name>
    <dbReference type="NCBI Taxonomy" id="184542"/>
    <lineage>
        <taxon>Eukaryota</taxon>
        <taxon>Metazoa</taxon>
        <taxon>Chordata</taxon>
        <taxon>Craniata</taxon>
        <taxon>Vertebrata</taxon>
        <taxon>Euteleostomi</taxon>
        <taxon>Lepidosauria</taxon>
        <taxon>Squamata</taxon>
        <taxon>Bifurcata</taxon>
        <taxon>Unidentata</taxon>
        <taxon>Episquamata</taxon>
        <taxon>Toxicofera</taxon>
        <taxon>Serpentes</taxon>
        <taxon>Colubroidea</taxon>
        <taxon>Viperidae</taxon>
        <taxon>Crotalinae</taxon>
        <taxon>Crotalus</taxon>
    </lineage>
</organism>
<feature type="chain" id="PRO_0000418568" description="Basic phospholipase A2 CB2">
    <location>
        <begin position="1"/>
        <end position="23" status="greater than"/>
    </location>
</feature>
<feature type="non-terminal residue">
    <location>
        <position position="23"/>
    </location>
</feature>
<proteinExistence type="evidence at protein level"/>
<reference key="1">
    <citation type="journal article" date="2004" name="Biochem. J.">
        <title>Molecular evolution and structure-function relationships of crotoxin-like and asparagine-6-containing phospholipases A2 in pit viper venoms.</title>
        <authorList>
            <person name="Chen Y.-H."/>
            <person name="Wang Y.-M."/>
            <person name="Hseu M.-J."/>
            <person name="Tsai I.-H."/>
        </authorList>
    </citation>
    <scope>PROTEIN SEQUENCE</scope>
    <scope>FUNCTION</scope>
    <scope>MASS SPECTROMETRY</scope>
    <source>
        <tissue>Venom</tissue>
    </source>
</reference>
<sequence length="23" mass="2807">SLLQFNKMIKFETRKNAIPFYAF</sequence>
<keyword id="KW-0106">Calcium</keyword>
<keyword id="KW-0903">Direct protein sequencing</keyword>
<keyword id="KW-1015">Disulfide bond</keyword>
<keyword id="KW-0378">Hydrolase</keyword>
<keyword id="KW-0442">Lipid degradation</keyword>
<keyword id="KW-0443">Lipid metabolism</keyword>
<keyword id="KW-0479">Metal-binding</keyword>
<keyword id="KW-0528">Neurotoxin</keyword>
<keyword id="KW-0638">Presynaptic neurotoxin</keyword>
<keyword id="KW-0964">Secreted</keyword>
<keyword id="KW-0800">Toxin</keyword>
<evidence type="ECO:0000250" key="1"/>
<evidence type="ECO:0000269" key="2">
    <source>
    </source>
</evidence>
<evidence type="ECO:0000305" key="3"/>
<protein>
    <recommendedName>
        <fullName>Basic phospholipase A2 CB2</fullName>
        <shortName>svPLA2</shortName>
        <ecNumber>3.1.1.4</ecNumber>
    </recommendedName>
    <alternativeName>
        <fullName>Phosphatidylcholine 2-acylhydrolase</fullName>
    </alternativeName>
</protein>
<dbReference type="EC" id="3.1.1.4"/>
<dbReference type="GO" id="GO:0005576">
    <property type="term" value="C:extracellular region"/>
    <property type="evidence" value="ECO:0007669"/>
    <property type="project" value="UniProtKB-SubCell"/>
</dbReference>
<dbReference type="GO" id="GO:0046872">
    <property type="term" value="F:metal ion binding"/>
    <property type="evidence" value="ECO:0007669"/>
    <property type="project" value="UniProtKB-KW"/>
</dbReference>
<dbReference type="GO" id="GO:0004623">
    <property type="term" value="F:phospholipase A2 activity"/>
    <property type="evidence" value="ECO:0007669"/>
    <property type="project" value="UniProtKB-EC"/>
</dbReference>
<dbReference type="GO" id="GO:0090729">
    <property type="term" value="F:toxin activity"/>
    <property type="evidence" value="ECO:0007669"/>
    <property type="project" value="UniProtKB-KW"/>
</dbReference>
<dbReference type="GO" id="GO:0016042">
    <property type="term" value="P:lipid catabolic process"/>
    <property type="evidence" value="ECO:0007669"/>
    <property type="project" value="UniProtKB-KW"/>
</dbReference>
<name>PA2B2_CRODM</name>
<comment type="function">
    <text evidence="2">Snake venom phospholipase A2 (PLA2) that shows presynaptic neurotoxicity. PLA2 catalyzes the calcium-dependent hydrolysis of the 2-acyl groups in 3-sn-phosphoglycerides.</text>
</comment>
<comment type="catalytic activity">
    <reaction>
        <text>a 1,2-diacyl-sn-glycero-3-phosphocholine + H2O = a 1-acyl-sn-glycero-3-phosphocholine + a fatty acid + H(+)</text>
        <dbReference type="Rhea" id="RHEA:15801"/>
        <dbReference type="ChEBI" id="CHEBI:15377"/>
        <dbReference type="ChEBI" id="CHEBI:15378"/>
        <dbReference type="ChEBI" id="CHEBI:28868"/>
        <dbReference type="ChEBI" id="CHEBI:57643"/>
        <dbReference type="ChEBI" id="CHEBI:58168"/>
        <dbReference type="EC" id="3.1.1.4"/>
    </reaction>
</comment>
<comment type="cofactor">
    <cofactor evidence="1">
        <name>Ca(2+)</name>
        <dbReference type="ChEBI" id="CHEBI:29108"/>
    </cofactor>
    <text evidence="1">Binds 1 Ca(2+) ion.</text>
</comment>
<comment type="subcellular location">
    <subcellularLocation>
        <location>Secreted</location>
    </subcellularLocation>
</comment>
<comment type="tissue specificity">
    <text>Expressed by the venom gland.</text>
</comment>
<comment type="PTM">
    <text evidence="1">Contains 7 disulfide bonds.</text>
</comment>
<comment type="mass spectrometry" mass="14244.0" method="Electrospray" evidence="2"/>
<comment type="similarity">
    <text evidence="3">Belongs to the phospholipase A2 family. Group II subfamily.</text>
</comment>